<reference key="1">
    <citation type="submission" date="2006-08" db="EMBL/GenBank/DDBJ databases">
        <title>Complete sequence of Shewanella sp. MR-4.</title>
        <authorList>
            <consortium name="US DOE Joint Genome Institute"/>
            <person name="Copeland A."/>
            <person name="Lucas S."/>
            <person name="Lapidus A."/>
            <person name="Barry K."/>
            <person name="Detter J.C."/>
            <person name="Glavina del Rio T."/>
            <person name="Hammon N."/>
            <person name="Israni S."/>
            <person name="Dalin E."/>
            <person name="Tice H."/>
            <person name="Pitluck S."/>
            <person name="Kiss H."/>
            <person name="Brettin T."/>
            <person name="Bruce D."/>
            <person name="Han C."/>
            <person name="Tapia R."/>
            <person name="Gilna P."/>
            <person name="Schmutz J."/>
            <person name="Larimer F."/>
            <person name="Land M."/>
            <person name="Hauser L."/>
            <person name="Kyrpides N."/>
            <person name="Mikhailova N."/>
            <person name="Nealson K."/>
            <person name="Konstantinidis K."/>
            <person name="Klappenbach J."/>
            <person name="Tiedje J."/>
            <person name="Richardson P."/>
        </authorList>
    </citation>
    <scope>NUCLEOTIDE SEQUENCE [LARGE SCALE GENOMIC DNA]</scope>
    <source>
        <strain>MR-4</strain>
    </source>
</reference>
<evidence type="ECO:0000255" key="1">
    <source>
        <dbReference type="HAMAP-Rule" id="MF_00661"/>
    </source>
</evidence>
<evidence type="ECO:0000256" key="2">
    <source>
        <dbReference type="SAM" id="MobiDB-lite"/>
    </source>
</evidence>
<comment type="function">
    <text evidence="1">DEAD-box RNA helicase involved in RNA degradation. Has RNA-dependent ATPase activity and unwinds double-stranded RNA.</text>
</comment>
<comment type="catalytic activity">
    <reaction evidence="1">
        <text>ATP + H2O = ADP + phosphate + H(+)</text>
        <dbReference type="Rhea" id="RHEA:13065"/>
        <dbReference type="ChEBI" id="CHEBI:15377"/>
        <dbReference type="ChEBI" id="CHEBI:15378"/>
        <dbReference type="ChEBI" id="CHEBI:30616"/>
        <dbReference type="ChEBI" id="CHEBI:43474"/>
        <dbReference type="ChEBI" id="CHEBI:456216"/>
        <dbReference type="EC" id="3.6.4.13"/>
    </reaction>
</comment>
<comment type="subunit">
    <text evidence="1">Component of the RNA degradosome, which is a multiprotein complex involved in RNA processing and mRNA degradation.</text>
</comment>
<comment type="subcellular location">
    <subcellularLocation>
        <location evidence="1">Cytoplasm</location>
    </subcellularLocation>
</comment>
<comment type="similarity">
    <text evidence="1">Belongs to the DEAD box helicase family. RhlB subfamily.</text>
</comment>
<name>RHLB_SHESM</name>
<gene>
    <name evidence="1" type="primary">rhlB</name>
    <name type="ordered locus">Shewmr4_0411</name>
</gene>
<sequence>MSQTHLSNQKFADLPLHPEVKQALAENGFEFCTPIQALSLPVLLQSKDIAGQAQTGTGKTMAFLVATFNHLLSTPIPENRQLNQPRAIIMAPTRELAIQIAKDAILLAKHTHLKVGIVYGGESYDVQRKVLDQGVDILIGTTGRIIDYVRQGIISLNAIQAVVLDEADRMFDLGFIKDIRFLFRRMPNADQRLNMLFSATLSMKVQELAYDHMNDPVKVEIAPEEKTSKNIKEEIFYPSQEDKIRLLLTLIEEDWPEKAIVFSNTKHSCENLWSWLEGDGHRVGLLTGDVPQKKRIRILEQFTQGQLDILVATDVAARGLHISDVSHVYNYDLPDDCEDYVHRIGRTGRAGNKGVSVSFACEEYALNLPAIESYINHSIPVSNYDRDALLDDIPPPVKIHRKHPAGARNLRERSGAGRPQGAHRSGGRPPRHDRTRRQP</sequence>
<accession>Q0HN76</accession>
<organism>
    <name type="scientific">Shewanella sp. (strain MR-4)</name>
    <dbReference type="NCBI Taxonomy" id="60480"/>
    <lineage>
        <taxon>Bacteria</taxon>
        <taxon>Pseudomonadati</taxon>
        <taxon>Pseudomonadota</taxon>
        <taxon>Gammaproteobacteria</taxon>
        <taxon>Alteromonadales</taxon>
        <taxon>Shewanellaceae</taxon>
        <taxon>Shewanella</taxon>
    </lineage>
</organism>
<protein>
    <recommendedName>
        <fullName evidence="1">ATP-dependent RNA helicase RhlB</fullName>
        <ecNumber evidence="1">3.6.4.13</ecNumber>
    </recommendedName>
</protein>
<feature type="chain" id="PRO_1000082868" description="ATP-dependent RNA helicase RhlB">
    <location>
        <begin position="1"/>
        <end position="439"/>
    </location>
</feature>
<feature type="domain" description="Helicase ATP-binding" evidence="1">
    <location>
        <begin position="40"/>
        <end position="219"/>
    </location>
</feature>
<feature type="domain" description="Helicase C-terminal" evidence="1">
    <location>
        <begin position="243"/>
        <end position="390"/>
    </location>
</feature>
<feature type="region of interest" description="Disordered" evidence="2">
    <location>
        <begin position="395"/>
        <end position="439"/>
    </location>
</feature>
<feature type="short sequence motif" description="Q motif">
    <location>
        <begin position="9"/>
        <end position="37"/>
    </location>
</feature>
<feature type="short sequence motif" description="DEAD box">
    <location>
        <begin position="165"/>
        <end position="168"/>
    </location>
</feature>
<feature type="compositionally biased region" description="Basic residues" evidence="2">
    <location>
        <begin position="425"/>
        <end position="439"/>
    </location>
</feature>
<feature type="binding site" evidence="1">
    <location>
        <begin position="53"/>
        <end position="60"/>
    </location>
    <ligand>
        <name>ATP</name>
        <dbReference type="ChEBI" id="CHEBI:30616"/>
    </ligand>
</feature>
<dbReference type="EC" id="3.6.4.13" evidence="1"/>
<dbReference type="EMBL" id="CP000446">
    <property type="protein sequence ID" value="ABI37491.1"/>
    <property type="molecule type" value="Genomic_DNA"/>
</dbReference>
<dbReference type="RefSeq" id="WP_011621214.1">
    <property type="nucleotide sequence ID" value="NC_008321.1"/>
</dbReference>
<dbReference type="SMR" id="Q0HN76"/>
<dbReference type="KEGG" id="she:Shewmr4_0411"/>
<dbReference type="HOGENOM" id="CLU_003041_1_3_6"/>
<dbReference type="GO" id="GO:0005829">
    <property type="term" value="C:cytosol"/>
    <property type="evidence" value="ECO:0007669"/>
    <property type="project" value="TreeGrafter"/>
</dbReference>
<dbReference type="GO" id="GO:0005524">
    <property type="term" value="F:ATP binding"/>
    <property type="evidence" value="ECO:0007669"/>
    <property type="project" value="UniProtKB-UniRule"/>
</dbReference>
<dbReference type="GO" id="GO:0016887">
    <property type="term" value="F:ATP hydrolysis activity"/>
    <property type="evidence" value="ECO:0007669"/>
    <property type="project" value="RHEA"/>
</dbReference>
<dbReference type="GO" id="GO:0003723">
    <property type="term" value="F:RNA binding"/>
    <property type="evidence" value="ECO:0007669"/>
    <property type="project" value="UniProtKB-UniRule"/>
</dbReference>
<dbReference type="GO" id="GO:0003724">
    <property type="term" value="F:RNA helicase activity"/>
    <property type="evidence" value="ECO:0007669"/>
    <property type="project" value="UniProtKB-UniRule"/>
</dbReference>
<dbReference type="GO" id="GO:0006401">
    <property type="term" value="P:RNA catabolic process"/>
    <property type="evidence" value="ECO:0007669"/>
    <property type="project" value="UniProtKB-UniRule"/>
</dbReference>
<dbReference type="CDD" id="cd00268">
    <property type="entry name" value="DEADc"/>
    <property type="match status" value="1"/>
</dbReference>
<dbReference type="CDD" id="cd18787">
    <property type="entry name" value="SF2_C_DEAD"/>
    <property type="match status" value="1"/>
</dbReference>
<dbReference type="FunFam" id="3.40.50.300:FF:000312">
    <property type="entry name" value="ATP-dependent RNA helicase RhlB"/>
    <property type="match status" value="1"/>
</dbReference>
<dbReference type="Gene3D" id="3.40.50.300">
    <property type="entry name" value="P-loop containing nucleotide triphosphate hydrolases"/>
    <property type="match status" value="2"/>
</dbReference>
<dbReference type="HAMAP" id="MF_00661">
    <property type="entry name" value="DEAD_helicase_RhlB"/>
    <property type="match status" value="1"/>
</dbReference>
<dbReference type="InterPro" id="IPR011545">
    <property type="entry name" value="DEAD/DEAH_box_helicase_dom"/>
</dbReference>
<dbReference type="InterPro" id="IPR050079">
    <property type="entry name" value="DEAD_box_RNA_helicase"/>
</dbReference>
<dbReference type="InterPro" id="IPR014001">
    <property type="entry name" value="Helicase_ATP-bd"/>
</dbReference>
<dbReference type="InterPro" id="IPR001650">
    <property type="entry name" value="Helicase_C-like"/>
</dbReference>
<dbReference type="InterPro" id="IPR027417">
    <property type="entry name" value="P-loop_NTPase"/>
</dbReference>
<dbReference type="InterPro" id="IPR000629">
    <property type="entry name" value="RNA-helicase_DEAD-box_CS"/>
</dbReference>
<dbReference type="InterPro" id="IPR023554">
    <property type="entry name" value="RNA_helicase_ATP-dep_RhlB"/>
</dbReference>
<dbReference type="InterPro" id="IPR014014">
    <property type="entry name" value="RNA_helicase_DEAD_Q_motif"/>
</dbReference>
<dbReference type="NCBIfam" id="NF003419">
    <property type="entry name" value="PRK04837.1"/>
    <property type="match status" value="1"/>
</dbReference>
<dbReference type="PANTHER" id="PTHR47959:SF10">
    <property type="entry name" value="ATP-DEPENDENT RNA HELICASE RHLB"/>
    <property type="match status" value="1"/>
</dbReference>
<dbReference type="PANTHER" id="PTHR47959">
    <property type="entry name" value="ATP-DEPENDENT RNA HELICASE RHLE-RELATED"/>
    <property type="match status" value="1"/>
</dbReference>
<dbReference type="Pfam" id="PF00270">
    <property type="entry name" value="DEAD"/>
    <property type="match status" value="1"/>
</dbReference>
<dbReference type="Pfam" id="PF00271">
    <property type="entry name" value="Helicase_C"/>
    <property type="match status" value="1"/>
</dbReference>
<dbReference type="SMART" id="SM00487">
    <property type="entry name" value="DEXDc"/>
    <property type="match status" value="1"/>
</dbReference>
<dbReference type="SMART" id="SM00490">
    <property type="entry name" value="HELICc"/>
    <property type="match status" value="1"/>
</dbReference>
<dbReference type="SUPFAM" id="SSF52540">
    <property type="entry name" value="P-loop containing nucleoside triphosphate hydrolases"/>
    <property type="match status" value="1"/>
</dbReference>
<dbReference type="PROSITE" id="PS00039">
    <property type="entry name" value="DEAD_ATP_HELICASE"/>
    <property type="match status" value="1"/>
</dbReference>
<dbReference type="PROSITE" id="PS51192">
    <property type="entry name" value="HELICASE_ATP_BIND_1"/>
    <property type="match status" value="1"/>
</dbReference>
<dbReference type="PROSITE" id="PS51194">
    <property type="entry name" value="HELICASE_CTER"/>
    <property type="match status" value="1"/>
</dbReference>
<dbReference type="PROSITE" id="PS51195">
    <property type="entry name" value="Q_MOTIF"/>
    <property type="match status" value="1"/>
</dbReference>
<proteinExistence type="inferred from homology"/>
<keyword id="KW-0067">ATP-binding</keyword>
<keyword id="KW-0963">Cytoplasm</keyword>
<keyword id="KW-0347">Helicase</keyword>
<keyword id="KW-0378">Hydrolase</keyword>
<keyword id="KW-0547">Nucleotide-binding</keyword>
<keyword id="KW-0694">RNA-binding</keyword>